<evidence type="ECO:0000250" key="1">
    <source>
        <dbReference type="UniProtKB" id="G2Q5N0"/>
    </source>
</evidence>
<evidence type="ECO:0000250" key="2">
    <source>
        <dbReference type="UniProtKB" id="O00623"/>
    </source>
</evidence>
<evidence type="ECO:0000250" key="3">
    <source>
        <dbReference type="UniProtKB" id="Q04370"/>
    </source>
</evidence>
<evidence type="ECO:0000255" key="4"/>
<evidence type="ECO:0000305" key="5"/>
<reference key="1">
    <citation type="journal article" date="2000" name="J. Biol. Chem.">
        <title>Molecular anatomy of the peroxin Pex12p. Ring finger domain is essential for Pex12p function and interacts with the peroxisome-targeting signal type 1-receptor Pex5p and a ring peroxin, Pex10p.</title>
        <authorList>
            <person name="Okumoto K."/>
            <person name="Abe I."/>
            <person name="Fujiki Y."/>
        </authorList>
    </citation>
    <scope>NUCLEOTIDE SEQUENCE [MRNA]</scope>
</reference>
<gene>
    <name type="primary">PEX12</name>
</gene>
<protein>
    <recommendedName>
        <fullName evidence="5">Peroxisome assembly protein 12</fullName>
    </recommendedName>
    <alternativeName>
        <fullName evidence="5">Peroxin-12</fullName>
    </alternativeName>
</protein>
<organism>
    <name type="scientific">Cricetulus longicaudatus</name>
    <name type="common">Long-tailed dwarf hamster</name>
    <dbReference type="NCBI Taxonomy" id="10030"/>
    <lineage>
        <taxon>Eukaryota</taxon>
        <taxon>Metazoa</taxon>
        <taxon>Chordata</taxon>
        <taxon>Craniata</taxon>
        <taxon>Vertebrata</taxon>
        <taxon>Euteleostomi</taxon>
        <taxon>Mammalia</taxon>
        <taxon>Eutheria</taxon>
        <taxon>Euarchontoglires</taxon>
        <taxon>Glires</taxon>
        <taxon>Rodentia</taxon>
        <taxon>Myomorpha</taxon>
        <taxon>Muroidea</taxon>
        <taxon>Cricetidae</taxon>
        <taxon>Cricetinae</taxon>
        <taxon>Cricetulus</taxon>
    </lineage>
</organism>
<dbReference type="EMBL" id="AB041733">
    <property type="protein sequence ID" value="BAB11978.1"/>
    <property type="molecule type" value="mRNA"/>
</dbReference>
<dbReference type="SMR" id="Q9ET67"/>
<dbReference type="UniPathway" id="UPA00143"/>
<dbReference type="GO" id="GO:1990429">
    <property type="term" value="C:peroxisomal importomer complex"/>
    <property type="evidence" value="ECO:0007669"/>
    <property type="project" value="TreeGrafter"/>
</dbReference>
<dbReference type="GO" id="GO:0005778">
    <property type="term" value="C:peroxisomal membrane"/>
    <property type="evidence" value="ECO:0000250"/>
    <property type="project" value="UniProtKB"/>
</dbReference>
<dbReference type="GO" id="GO:0004842">
    <property type="term" value="F:ubiquitin-protein transferase activity"/>
    <property type="evidence" value="ECO:0007669"/>
    <property type="project" value="TreeGrafter"/>
</dbReference>
<dbReference type="GO" id="GO:0008270">
    <property type="term" value="F:zinc ion binding"/>
    <property type="evidence" value="ECO:0000250"/>
    <property type="project" value="UniProtKB"/>
</dbReference>
<dbReference type="GO" id="GO:0007031">
    <property type="term" value="P:peroxisome organization"/>
    <property type="evidence" value="ECO:0000250"/>
    <property type="project" value="UniProtKB"/>
</dbReference>
<dbReference type="GO" id="GO:0016558">
    <property type="term" value="P:protein import into peroxisome matrix"/>
    <property type="evidence" value="ECO:0000250"/>
    <property type="project" value="UniProtKB"/>
</dbReference>
<dbReference type="GO" id="GO:0006513">
    <property type="term" value="P:protein monoubiquitination"/>
    <property type="evidence" value="ECO:0007669"/>
    <property type="project" value="TreeGrafter"/>
</dbReference>
<dbReference type="CDD" id="cd16451">
    <property type="entry name" value="mRING_PEX12"/>
    <property type="match status" value="1"/>
</dbReference>
<dbReference type="FunFam" id="3.30.40.10:FF:000266">
    <property type="entry name" value="Peroxisome assembly protein 12"/>
    <property type="match status" value="1"/>
</dbReference>
<dbReference type="Gene3D" id="3.30.40.10">
    <property type="entry name" value="Zinc/RING finger domain, C3HC4 (zinc finger)"/>
    <property type="match status" value="1"/>
</dbReference>
<dbReference type="InterPro" id="IPR017375">
    <property type="entry name" value="PEX12"/>
</dbReference>
<dbReference type="InterPro" id="IPR006845">
    <property type="entry name" value="Pex_N"/>
</dbReference>
<dbReference type="InterPro" id="IPR013083">
    <property type="entry name" value="Znf_RING/FYVE/PHD"/>
</dbReference>
<dbReference type="PANTHER" id="PTHR12888:SF0">
    <property type="entry name" value="PEROXISOME ASSEMBLY PROTEIN 12"/>
    <property type="match status" value="1"/>
</dbReference>
<dbReference type="PANTHER" id="PTHR12888">
    <property type="entry name" value="PEROXISOME ASSEMBLY PROTEIN 12 PEROXIN-12"/>
    <property type="match status" value="1"/>
</dbReference>
<dbReference type="Pfam" id="PF04757">
    <property type="entry name" value="Pex2_Pex12"/>
    <property type="match status" value="1"/>
</dbReference>
<dbReference type="PIRSF" id="PIRSF038074">
    <property type="entry name" value="Peroxisome_assembly_p12"/>
    <property type="match status" value="1"/>
</dbReference>
<dbReference type="SUPFAM" id="SSF57850">
    <property type="entry name" value="RING/U-box"/>
    <property type="match status" value="1"/>
</dbReference>
<keyword id="KW-0472">Membrane</keyword>
<keyword id="KW-0479">Metal-binding</keyword>
<keyword id="KW-0576">Peroxisome</keyword>
<keyword id="KW-0653">Protein transport</keyword>
<keyword id="KW-0812">Transmembrane</keyword>
<keyword id="KW-1133">Transmembrane helix</keyword>
<keyword id="KW-0813">Transport</keyword>
<keyword id="KW-0833">Ubl conjugation pathway</keyword>
<keyword id="KW-0862">Zinc</keyword>
<keyword id="KW-0863">Zinc-finger</keyword>
<proteinExistence type="evidence at transcript level"/>
<comment type="function">
    <text evidence="2 3">Component of a retrotranslocation channel required for peroxisome organization by mediating export of the PEX5 receptor from peroxisomes to the cytosol, thereby promoting PEX5 recycling (By similarity). The retrotranslocation channel is composed of PEX2, PEX10 and PEX12; each subunit contributing transmembrane segments that coassemble into an open channel that specifically allows the passage of PEX5 through the peroxisomal membrane (By similarity). PEX12 also regulates PEX5 recycling by activating the E3 ubiquitin-protein ligase activity of PEX10 (By similarity). When PEX5 recycling is compromised, PEX12 stimulates PEX10-mediated polyubiquitination of PEX5, leading to its subsequent degradation (By similarity).</text>
</comment>
<comment type="pathway">
    <text evidence="2">Protein modification; protein ubiquitination.</text>
</comment>
<comment type="subunit">
    <text evidence="2">Component of the PEX2-PEX10-PEX12 retrotranslocation channel, composed of PEX2, PEX10 and PEX12. Interacts with PEX19 via its cytoplasmic domain.</text>
</comment>
<comment type="subcellular location">
    <subcellularLocation>
        <location evidence="2">Peroxisome membrane</location>
        <topology evidence="4">Multi-pass membrane protein</topology>
    </subcellularLocation>
</comment>
<comment type="domain">
    <text evidence="1">The three subunits of the retrotranslocation channel (PEX2, PEX10 and PEX12) coassemble in the membrane into a channel with an open 10 Angstrom pore. The RING-type zinc-fingers that catalyze PEX5 receptor ubiquitination are positioned above the pore on the cytosolic side of the complex.</text>
</comment>
<comment type="domain">
    <text evidence="3">The RING-type zinc-finger is degenerated and only coordinates one zinc ions, preventing E3 ubiquitin-protein ligase activity.</text>
</comment>
<comment type="similarity">
    <text evidence="5">Belongs to the pex2/pex10/pex12 family.</text>
</comment>
<sequence>MAEHGAHITTASVVDDQPSIFEVVAQDSLMTAVRPALQHVVKVLAESNPAHYGFFWRWFDEIFTLLDFLLQQHYLSRTSASFSEHFYGLKRIVAGSSQQPQRPASAGLPKEHLWKSTMFLVLLPYLKVKLEKLASSLREEDEYSIHPPSSHWKRFYRAFLAAYPFVNMAWEGWFLTQQLRYILGKAEHHSPLLKLAGVRLGRLTAQDIQAIEHRLSEASVMQDPVRSVGEKIKLALKKAVGGIALSLSTGLSVGVFFLQFLDWWYSSENQETIKSLTALPTPPPPVHLDYNSDSPLLPKMKTVCPLCRKTRVNDTVLATSGYVFCYRCVFNYVRSHQACPITGYPTEVQHLIKLYSPEN</sequence>
<name>PEX12_CRILO</name>
<feature type="chain" id="PRO_0000218609" description="Peroxisome assembly protein 12">
    <location>
        <begin position="1"/>
        <end position="359"/>
    </location>
</feature>
<feature type="topological domain" description="Peroxisomal matrix" evidence="1">
    <location>
        <begin position="1"/>
        <end position="19"/>
    </location>
</feature>
<feature type="transmembrane region" description="Helical; Name=TM1" evidence="1">
    <location>
        <begin position="20"/>
        <end position="47"/>
    </location>
</feature>
<feature type="topological domain" description="Cytoplasmic" evidence="1">
    <location>
        <begin position="48"/>
        <end position="51"/>
    </location>
</feature>
<feature type="transmembrane region" description="Helical; Name=TM2" evidence="1">
    <location>
        <begin position="52"/>
        <end position="76"/>
    </location>
</feature>
<feature type="topological domain" description="Peroxisomal matrix" evidence="1">
    <location>
        <begin position="77"/>
        <end position="109"/>
    </location>
</feature>
<feature type="transmembrane region" description="Helical; Name=TM3" evidence="1">
    <location>
        <begin position="110"/>
        <end position="139"/>
    </location>
</feature>
<feature type="topological domain" description="Cytoplasmic" evidence="1">
    <location>
        <begin position="140"/>
        <end position="144"/>
    </location>
</feature>
<feature type="transmembrane region" description="Helical; Name=TM4" evidence="1">
    <location>
        <begin position="145"/>
        <end position="183"/>
    </location>
</feature>
<feature type="topological domain" description="Peroxisomal matrix" evidence="1">
    <location>
        <begin position="184"/>
        <end position="249"/>
    </location>
</feature>
<feature type="transmembrane region" description="Helical; Name=TM5" evidence="1">
    <location>
        <begin position="250"/>
        <end position="277"/>
    </location>
</feature>
<feature type="topological domain" description="Cytoplasmic" evidence="1">
    <location>
        <begin position="278"/>
        <end position="359"/>
    </location>
</feature>
<feature type="zinc finger region" description="RING-type; degenerate">
    <location>
        <begin position="304"/>
        <end position="341"/>
    </location>
</feature>
<feature type="binding site" evidence="1">
    <location>
        <position position="304"/>
    </location>
    <ligand>
        <name>Zn(2+)</name>
        <dbReference type="ChEBI" id="CHEBI:29105"/>
    </ligand>
</feature>
<feature type="binding site" evidence="1">
    <location>
        <position position="307"/>
    </location>
    <ligand>
        <name>Zn(2+)</name>
        <dbReference type="ChEBI" id="CHEBI:29105"/>
    </ligand>
</feature>
<feature type="binding site" evidence="1">
    <location>
        <position position="325"/>
    </location>
    <ligand>
        <name>Zn(2+)</name>
        <dbReference type="ChEBI" id="CHEBI:29105"/>
    </ligand>
</feature>
<feature type="binding site" evidence="1">
    <location>
        <position position="328"/>
    </location>
    <ligand>
        <name>Zn(2+)</name>
        <dbReference type="ChEBI" id="CHEBI:29105"/>
    </ligand>
</feature>
<accession>Q9ET67</accession>